<keyword id="KW-0167">Capsid protein</keyword>
<keyword id="KW-1176">Cytoplasmic inwards viral transport</keyword>
<keyword id="KW-0238">DNA-binding</keyword>
<keyword id="KW-1035">Host cytoplasm</keyword>
<keyword id="KW-1048">Host nucleus</keyword>
<keyword id="KW-0945">Host-virus interaction</keyword>
<keyword id="KW-1177">Microtubular inwards viral transport</keyword>
<keyword id="KW-1185">Reference proteome</keyword>
<keyword id="KW-0694">RNA-binding</keyword>
<keyword id="KW-0543">Viral nucleoprotein</keyword>
<keyword id="KW-0946">Virion</keyword>
<keyword id="KW-1160">Virus entry into host cell</keyword>
<dbReference type="EMBL" id="Y08851">
    <property type="protein sequence ID" value="CAA70074.1"/>
    <property type="molecule type" value="Genomic_DNA"/>
</dbReference>
<dbReference type="RefSeq" id="YP_009513248.1">
    <property type="nucleotide sequence ID" value="NC_039242.1"/>
</dbReference>
<dbReference type="SMR" id="O56860"/>
<dbReference type="GeneID" id="37627276"/>
<dbReference type="OrthoDB" id="10832at10239"/>
<dbReference type="Proteomes" id="UP000008763">
    <property type="component" value="Genome"/>
</dbReference>
<dbReference type="GO" id="GO:0043657">
    <property type="term" value="C:host cell"/>
    <property type="evidence" value="ECO:0007669"/>
    <property type="project" value="GOC"/>
</dbReference>
<dbReference type="GO" id="GO:0042025">
    <property type="term" value="C:host cell nucleus"/>
    <property type="evidence" value="ECO:0007669"/>
    <property type="project" value="UniProtKB-SubCell"/>
</dbReference>
<dbReference type="GO" id="GO:0044220">
    <property type="term" value="C:host cell perinuclear region of cytoplasm"/>
    <property type="evidence" value="ECO:0007669"/>
    <property type="project" value="UniProtKB-SubCell"/>
</dbReference>
<dbReference type="GO" id="GO:0044163">
    <property type="term" value="C:host cytoskeleton"/>
    <property type="evidence" value="ECO:0007669"/>
    <property type="project" value="InterPro"/>
</dbReference>
<dbReference type="GO" id="GO:0019013">
    <property type="term" value="C:viral nucleocapsid"/>
    <property type="evidence" value="ECO:0007669"/>
    <property type="project" value="UniProtKB-KW"/>
</dbReference>
<dbReference type="GO" id="GO:0003677">
    <property type="term" value="F:DNA binding"/>
    <property type="evidence" value="ECO:0007669"/>
    <property type="project" value="UniProtKB-KW"/>
</dbReference>
<dbReference type="GO" id="GO:0003723">
    <property type="term" value="F:RNA binding"/>
    <property type="evidence" value="ECO:0007669"/>
    <property type="project" value="UniProtKB-KW"/>
</dbReference>
<dbReference type="GO" id="GO:0075521">
    <property type="term" value="P:microtubule-dependent intracellular transport of viral material towards nucleus"/>
    <property type="evidence" value="ECO:0007669"/>
    <property type="project" value="UniProtKB-KW"/>
</dbReference>
<dbReference type="GO" id="GO:0046718">
    <property type="term" value="P:symbiont entry into host cell"/>
    <property type="evidence" value="ECO:0007669"/>
    <property type="project" value="UniProtKB-KW"/>
</dbReference>
<dbReference type="GO" id="GO:0019076">
    <property type="term" value="P:viral release from host cell"/>
    <property type="evidence" value="ECO:0007669"/>
    <property type="project" value="InterPro"/>
</dbReference>
<dbReference type="InterPro" id="IPR004957">
    <property type="entry name" value="Gag_N"/>
</dbReference>
<dbReference type="Pfam" id="PF20672">
    <property type="entry name" value="Gag_FV_central"/>
    <property type="match status" value="1"/>
</dbReference>
<dbReference type="Pfam" id="PF03276">
    <property type="entry name" value="Gag_spuma_N"/>
    <property type="match status" value="1"/>
</dbReference>
<organism>
    <name type="scientific">Feline foamy virus</name>
    <name type="common">FFV</name>
    <name type="synonym">Feline syncytial virus</name>
    <dbReference type="NCBI Taxonomy" id="53182"/>
    <lineage>
        <taxon>Viruses</taxon>
        <taxon>Riboviria</taxon>
        <taxon>Pararnavirae</taxon>
        <taxon>Artverviricota</taxon>
        <taxon>Revtraviricetes</taxon>
        <taxon>Ortervirales</taxon>
        <taxon>Retroviridae</taxon>
        <taxon>Spumaretrovirinae</taxon>
        <taxon>Felispumavirus</taxon>
    </lineage>
</organism>
<accession>O56860</accession>
<gene>
    <name type="primary">gag</name>
</gene>
<name>GAG_FFV</name>
<sequence length="514" mass="55534">MARELNPLQLQQLYINNGLQPNPGHGDIIAVRFTGGPWGPGDRWARVTIRLQDNTGQPLQVPGYDLEPGIINLREDILIAGPYNLIRTAFLDLEPARGPERHGPFGDGRLQPGDGLSEGFQPITDEEIQAEVGTIGAARNEIRLLREALQRLQAGGVGRPIPGAVLQPQPVIGPVIPINHLRSVIGNTPPNPRDVALWLGRSTAAIEGVFPIVDQVTRMRVVNALVASHPGLTLTENEAGSWNAAISALWRKAHGAAAQHELAGVLSDINKKEGIQTAFNLGMQFTDGNWSLVWGIIRTLLPGQALVTNAQSQFDLMGDDIQRAENFPRVINNLYTMLGLNIHGQSIRPRVQTQPLQTRPRNPGRSQQGQLNQPRPQNRANQSYRPPRQQQQHSDVPEQRDQRGPSQPPRGSGGGYNFRRNPQQPQRYGQGPPGPNPYRRFGDGGNPQQQGPPPNRGPDQGPRPGGNPRGGGRGQGPRNGGGSAAAVHTVKASENETKNGSAEAVDGGKKGGKD</sequence>
<evidence type="ECO:0000250" key="1"/>
<evidence type="ECO:0000255" key="2"/>
<evidence type="ECO:0000256" key="3">
    <source>
        <dbReference type="SAM" id="MobiDB-lite"/>
    </source>
</evidence>
<evidence type="ECO:0000269" key="4">
    <source>
    </source>
</evidence>
<evidence type="ECO:0000269" key="5">
    <source>
    </source>
</evidence>
<proteinExistence type="evidence at protein level"/>
<comment type="function">
    <text evidence="1">Involved in capsid formation and genome binding. Shortly after infection, interaction between incoming particle-associated Gag proteins and host dynein allows centrosomal targeting of the viral genome (associated to Gag), prior to nucleus translocation and integration into host genome (By similarity).</text>
</comment>
<comment type="subunit">
    <molecule>Gag protein</molecule>
    <text evidence="1">Specifically interacts with the N-terminus of leader peptide. This specific interaction between Gag protein and Env glycoprotein may compensate for the lack of a Gag membrane targeting signal, and allow particle egress. The capsid is composed of multimeric Gag protein. Interacts with host light chain cytoplasmic dynein DYNLL1; this interaction is critical for intracellular microtubule-dependent viral genome transport toward the centrosome (By similarity).</text>
</comment>
<comment type="subcellular location">
    <molecule>Gag protein</molecule>
    <subcellularLocation>
        <location evidence="1">Virion</location>
    </subcellularLocation>
    <subcellularLocation>
        <location evidence="1">Host nucleus</location>
    </subcellularLocation>
    <subcellularLocation>
        <location evidence="1">Host cytoplasm</location>
    </subcellularLocation>
    <text evidence="1">Nuclear at initial phase, cytoplasmic at assembly. Shortly after infection, Gag protein is targeted to centrosomes. It is then actively transported into the nucleus thanks to its nuclear localization signal (By similarity). In the late phases of infection, Gag proteins assemble in the cytoplasm to form the virion's capsids.</text>
</comment>
<comment type="subcellular location">
    <molecule>p3</molecule>
    <subcellularLocation>
        <location>Virion</location>
    </subcellularLocation>
    <subcellularLocation>
        <location>Host cytoplasm</location>
        <location>Host perinuclear region</location>
    </subcellularLocation>
    <text evidence="1">Gag proteins assemble in the cytoplasm to form the capsids.</text>
</comment>
<comment type="PTM">
    <text evidence="1">Specific enzymatic cleavages in vivo by viral protease yield mature proteins. The protease is not cleaved off from Pol. Since cleavage efficiency is not optimal for all sites, intermediary molecules are expressed (By similarity).</text>
</comment>
<comment type="miscellaneous">
    <text>Foamy viruses are distinct from other retroviruses in many respects. Their protease is active as an uncleaved Pro-Pol protein. Mature particles do not include the usual processed retroviral structural protein (MA, CA and NC), but instead contain two large Gag proteins. Their functional nucleic acid appears to be either RNA or dsDNA (up to 20% of extracellular particles), because they probably proceed either to an early (before integration) or late reverse transcription (after assembly). Foamy viruses have the ability to retrotranspose intracellularly with high efficiency. They bud predominantly into the endoplasmic reticulum (ER) and occasionally at the plasma membrane. Budding requires the presence of Env proteins. Most viral particles probably remain within the infected cell.</text>
</comment>
<reference key="1">
    <citation type="journal article" date="1997" name="J. Virol.">
        <title>Characterization of the genome of feline foamy virus and its proteins shows distinct features different from those of primate Spumaviruses.</title>
        <authorList>
            <person name="Winkler I."/>
            <person name="Bodem J."/>
            <person name="Haas L."/>
            <person name="Zemba M."/>
            <person name="Delius H."/>
            <person name="Flower R."/>
            <person name="Fluegel R.M."/>
            <person name="Loechelt M."/>
        </authorList>
    </citation>
    <scope>NUCLEOTIDE SEQUENCE [GENOMIC DNA]</scope>
</reference>
<reference key="2">
    <citation type="journal article" date="2001" name="J. Virol.">
        <title>Specific interaction of a novel foamy virus Env leader protein with the N-terminal Gag domain.</title>
        <authorList>
            <person name="Wilk T."/>
            <person name="Geiselhart V."/>
            <person name="Frech M."/>
            <person name="Fuller S.D."/>
            <person name="Fluegel R.M."/>
            <person name="Loechelt M."/>
        </authorList>
    </citation>
    <scope>INTERACTION OF GAG PROTEIN N-TERMINUS WITH ENV LEADER PEPTIDE</scope>
</reference>
<reference key="3">
    <citation type="journal article" date="2003" name="Virology">
        <title>Features of the Env leader protein and the N-terminal Gag domain of feline foamy virus important for virus morphogenesis.</title>
        <authorList>
            <person name="Geiselhart V."/>
            <person name="Schwantes A."/>
            <person name="Bastone P."/>
            <person name="Frech M."/>
            <person name="Loechelt M."/>
        </authorList>
    </citation>
    <scope>SUBCELLULAR LOCATION</scope>
    <scope>INTERACTION OF GAG PROTEIN N-TERMINUS WITH ENV LEADER PEPTIDE</scope>
    <scope>MUTAGENESIS OF ARG-43</scope>
</reference>
<reference key="4">
    <citation type="journal article" date="2005" name="J. Virol.">
        <title>N-terminal Gag domain required for foamy virus particle assembly and export.</title>
        <authorList>
            <person name="Cartellieri M."/>
            <person name="Herchenroeder O."/>
            <person name="Rudolph W."/>
            <person name="Heinkelein M."/>
            <person name="Lindemann D."/>
            <person name="Zentgraf H."/>
            <person name="Rethwilm A."/>
        </authorList>
    </citation>
    <scope>MUTAGENESIS OF TRP-38</scope>
</reference>
<feature type="chain" id="PRO_0000244977" description="Gag polyprotein">
    <location>
        <begin position="1"/>
        <end position="514"/>
    </location>
</feature>
<feature type="chain" id="PRO_0000244978" description="Gag protein" evidence="1">
    <location>
        <begin position="1"/>
        <end position="488"/>
    </location>
</feature>
<feature type="chain" id="PRO_0000244979" description="p3" evidence="1">
    <location>
        <begin position="489"/>
        <end position="514"/>
    </location>
</feature>
<feature type="region of interest" description="Disordered" evidence="3">
    <location>
        <begin position="352"/>
        <end position="514"/>
    </location>
</feature>
<feature type="compositionally biased region" description="Polar residues" evidence="3">
    <location>
        <begin position="352"/>
        <end position="394"/>
    </location>
</feature>
<feature type="compositionally biased region" description="Low complexity" evidence="3">
    <location>
        <begin position="419"/>
        <end position="430"/>
    </location>
</feature>
<feature type="compositionally biased region" description="Gly residues" evidence="3">
    <location>
        <begin position="463"/>
        <end position="483"/>
    </location>
</feature>
<feature type="site" description="Cleavage; by viral protease; low efficiency" evidence="2">
    <location>
        <begin position="182"/>
        <end position="183"/>
    </location>
</feature>
<feature type="site" description="Cleavage; by viral protease; low efficiency" evidence="2">
    <location>
        <begin position="210"/>
        <end position="211"/>
    </location>
</feature>
<feature type="site" description="Cleavage; by viral protease; low efficiency" evidence="2">
    <location>
        <begin position="223"/>
        <end position="224"/>
    </location>
</feature>
<feature type="site" description="Cleavage; by viral protease; partial">
    <location>
        <begin position="488"/>
        <end position="489"/>
    </location>
</feature>
<feature type="mutagenesis site" description="Loss of capsid export." evidence="5">
    <original>W</original>
    <variation>A</variation>
    <location>
        <position position="38"/>
    </location>
</feature>
<feature type="mutagenesis site" description="Induces deficiency in replication; Gag is mislocalized to the nucleus." evidence="4">
    <original>R</original>
    <variation>A</variation>
    <location>
        <position position="43"/>
    </location>
</feature>
<organismHost>
    <name type="scientific">Felis catus</name>
    <name type="common">Cat</name>
    <name type="synonym">Felis silvestris catus</name>
    <dbReference type="NCBI Taxonomy" id="9685"/>
</organismHost>
<protein>
    <recommendedName>
        <fullName>Gag polyprotein</fullName>
    </recommendedName>
    <component>
        <recommendedName>
            <fullName>Gag protein</fullName>
        </recommendedName>
        <alternativeName>
            <fullName>p48Gag</fullName>
        </alternativeName>
    </component>
    <component>
        <recommendedName>
            <fullName>p3</fullName>
        </recommendedName>
        <alternativeName>
            <fullName>p3Gag</fullName>
        </alternativeName>
    </component>
</protein>